<sequence>MSVGCACPGCSSKSFKLYSPKEPPNGNAFPPFHPGTMLDRDVGPTPMYPPTYLEPGIGRHTPYGNQTDYRIFELNKRLQNWTEECDNLWWDAFTTEFFEDDAMLTITFCLEDGPKRYTIGRTLIPRYFRSIFEGGATELYYVLKHPKEAFHSNFVSLDCDQGSMVTQHGKPMFTQVCVEGRLYLEFMFDDMMRIKTWHFSIRQHRELIPRSILAMHAQDPQMLDQLSKNITRCGLSNSTLNYLRLCVILEPMQELMSRHKTYSLSPRDCLKTCLFQKWQRMVAPPAEPARQQPSKRRKRKMSGGSTMSSGGGNTNNSNSKKKSPASTFALSSQVPDVMVVGEPTLMGGEFGDEDERLITRLENTQFDAANGIDDEDSFNNSPALGANSPWNSKPPSSQESKSENPTSQASQ</sequence>
<proteinExistence type="evidence at protein level"/>
<dbReference type="EMBL" id="U70375">
    <property type="protein sequence ID" value="AAC52933.1"/>
    <property type="molecule type" value="mRNA"/>
</dbReference>
<dbReference type="EMBL" id="U69270">
    <property type="protein sequence ID" value="AAC52887.1"/>
    <property type="molecule type" value="mRNA"/>
</dbReference>
<dbReference type="EMBL" id="U89488">
    <property type="protein sequence ID" value="AAB96885.1"/>
    <property type="molecule type" value="mRNA"/>
</dbReference>
<dbReference type="EMBL" id="AF030333">
    <property type="protein sequence ID" value="AAB94131.1"/>
    <property type="molecule type" value="mRNA"/>
</dbReference>
<dbReference type="EMBL" id="AF024524">
    <property type="protein sequence ID" value="AAC40064.1"/>
    <property type="molecule type" value="Genomic_DNA"/>
</dbReference>
<dbReference type="EMBL" id="AB250383">
    <property type="protein sequence ID" value="BAE95401.1"/>
    <property type="molecule type" value="mRNA"/>
</dbReference>
<dbReference type="EMBL" id="BC013624">
    <property type="protein sequence ID" value="AAH13624.1"/>
    <property type="molecule type" value="mRNA"/>
</dbReference>
<dbReference type="CCDS" id="CCDS29870.1">
    <molecule id="P70662-3"/>
</dbReference>
<dbReference type="CCDS" id="CCDS50455.1">
    <molecule id="P70662-1"/>
</dbReference>
<dbReference type="RefSeq" id="NP_001106879.1">
    <molecule id="P70662-1"/>
    <property type="nucleotide sequence ID" value="NM_001113408.3"/>
</dbReference>
<dbReference type="RefSeq" id="NP_001347265.1">
    <molecule id="P70662-3"/>
    <property type="nucleotide sequence ID" value="NM_001360336.2"/>
</dbReference>
<dbReference type="RefSeq" id="NP_001397895.1">
    <molecule id="P70662-3"/>
    <property type="nucleotide sequence ID" value="NM_001410966.1"/>
</dbReference>
<dbReference type="RefSeq" id="NP_034827.1">
    <molecule id="P70662-3"/>
    <property type="nucleotide sequence ID" value="NM_010697.3"/>
</dbReference>
<dbReference type="RefSeq" id="XP_011245459.1">
    <property type="nucleotide sequence ID" value="XM_011247157.1"/>
</dbReference>
<dbReference type="PDB" id="1J2O">
    <property type="method" value="NMR"/>
    <property type="chains" value="A=336-375"/>
</dbReference>
<dbReference type="PDB" id="1M3V">
    <property type="method" value="NMR"/>
    <property type="chains" value="A=336-375"/>
</dbReference>
<dbReference type="PDB" id="1RUT">
    <property type="method" value="X-ray"/>
    <property type="resolution" value="1.30 A"/>
    <property type="chains" value="X=336-375"/>
</dbReference>
<dbReference type="PDB" id="2JTN">
    <property type="method" value="NMR"/>
    <property type="chains" value="A=331-375"/>
</dbReference>
<dbReference type="PDB" id="2L6Y">
    <property type="method" value="NMR"/>
    <property type="chains" value="B=336-348"/>
</dbReference>
<dbReference type="PDB" id="2L6Z">
    <property type="method" value="NMR"/>
    <property type="chains" value="C=336-348"/>
</dbReference>
<dbReference type="PDB" id="2LXD">
    <property type="method" value="NMR"/>
    <property type="chains" value="A=336-375"/>
</dbReference>
<dbReference type="PDB" id="4JCJ">
    <property type="method" value="X-ray"/>
    <property type="resolution" value="3.00 A"/>
    <property type="chains" value="A/B/C=336-366"/>
</dbReference>
<dbReference type="PDB" id="6PTL">
    <property type="method" value="X-ray"/>
    <property type="resolution" value="2.50 A"/>
    <property type="chains" value="A=50-236"/>
</dbReference>
<dbReference type="PDBsum" id="1J2O"/>
<dbReference type="PDBsum" id="1M3V"/>
<dbReference type="PDBsum" id="1RUT"/>
<dbReference type="PDBsum" id="2JTN"/>
<dbReference type="PDBsum" id="2L6Y"/>
<dbReference type="PDBsum" id="2L6Z"/>
<dbReference type="PDBsum" id="2LXD"/>
<dbReference type="PDBsum" id="4JCJ"/>
<dbReference type="PDBsum" id="6PTL"/>
<dbReference type="SASBDB" id="P70662"/>
<dbReference type="SMR" id="P70662"/>
<dbReference type="BioGRID" id="201125">
    <property type="interactions" value="33"/>
</dbReference>
<dbReference type="CORUM" id="P70662"/>
<dbReference type="DIP" id="DIP-42842N"/>
<dbReference type="FunCoup" id="P70662">
    <property type="interactions" value="2747"/>
</dbReference>
<dbReference type="IntAct" id="P70662">
    <property type="interactions" value="30"/>
</dbReference>
<dbReference type="MINT" id="P70662"/>
<dbReference type="STRING" id="10090.ENSMUSP00000118546"/>
<dbReference type="GlyGen" id="P70662">
    <property type="glycosylation" value="3 sites, 1 N-linked glycan (1 site), 1 O-linked glycan (1 site)"/>
</dbReference>
<dbReference type="iPTMnet" id="P70662"/>
<dbReference type="PhosphoSitePlus" id="P70662"/>
<dbReference type="jPOST" id="P70662"/>
<dbReference type="PaxDb" id="10090-ENSMUSP00000118546"/>
<dbReference type="ProteomicsDB" id="264922">
    <molecule id="P70662-1"/>
</dbReference>
<dbReference type="ProteomicsDB" id="264923">
    <molecule id="P70662-2"/>
</dbReference>
<dbReference type="ProteomicsDB" id="264924">
    <molecule id="P70662-3"/>
</dbReference>
<dbReference type="Pumba" id="P70662"/>
<dbReference type="Antibodypedia" id="17969">
    <property type="antibodies" value="273 antibodies from 31 providers"/>
</dbReference>
<dbReference type="DNASU" id="16825"/>
<dbReference type="Ensembl" id="ENSMUST00000026252.14">
    <molecule id="P70662-3"/>
    <property type="protein sequence ID" value="ENSMUSP00000026252.8"/>
    <property type="gene ID" value="ENSMUSG00000025223.16"/>
</dbReference>
<dbReference type="Ensembl" id="ENSMUST00000056931.14">
    <molecule id="P70662-3"/>
    <property type="protein sequence ID" value="ENSMUSP00000053680.8"/>
    <property type="gene ID" value="ENSMUSG00000025223.16"/>
</dbReference>
<dbReference type="Ensembl" id="ENSMUST00000137771.2">
    <molecule id="P70662-2"/>
    <property type="protein sequence ID" value="ENSMUSP00000114667.2"/>
    <property type="gene ID" value="ENSMUSG00000025223.16"/>
</dbReference>
<dbReference type="Ensembl" id="ENSMUST00000156585.9">
    <molecule id="P70662-1"/>
    <property type="protein sequence ID" value="ENSMUSP00000118546.2"/>
    <property type="gene ID" value="ENSMUSG00000025223.16"/>
</dbReference>
<dbReference type="Ensembl" id="ENSMUST00000185355.7">
    <molecule id="P70662-1"/>
    <property type="protein sequence ID" value="ENSMUSP00000139562.2"/>
    <property type="gene ID" value="ENSMUSG00000025223.16"/>
</dbReference>
<dbReference type="GeneID" id="16825"/>
<dbReference type="KEGG" id="mmu:16825"/>
<dbReference type="UCSC" id="uc008hrz.1">
    <molecule id="P70662-1"/>
    <property type="organism name" value="mouse"/>
</dbReference>
<dbReference type="UCSC" id="uc008hsa.1">
    <molecule id="P70662-2"/>
    <property type="organism name" value="mouse"/>
</dbReference>
<dbReference type="AGR" id="MGI:894762"/>
<dbReference type="CTD" id="8861"/>
<dbReference type="MGI" id="MGI:894762">
    <property type="gene designation" value="Ldb1"/>
</dbReference>
<dbReference type="VEuPathDB" id="HostDB:ENSMUSG00000025223"/>
<dbReference type="eggNOG" id="KOG2181">
    <property type="taxonomic scope" value="Eukaryota"/>
</dbReference>
<dbReference type="GeneTree" id="ENSGT00390000005639"/>
<dbReference type="HOGENOM" id="CLU_032597_0_0_1"/>
<dbReference type="InParanoid" id="P70662"/>
<dbReference type="OrthoDB" id="774557at2759"/>
<dbReference type="PhylomeDB" id="P70662"/>
<dbReference type="TreeFam" id="TF319923"/>
<dbReference type="Reactome" id="R-MMU-8939236">
    <property type="pathway name" value="RUNX1 regulates transcription of genes involved in differentiation of HSCs"/>
</dbReference>
<dbReference type="BioGRID-ORCS" id="16825">
    <property type="hits" value="8 hits in 78 CRISPR screens"/>
</dbReference>
<dbReference type="ChiTaRS" id="Ldb1">
    <property type="organism name" value="mouse"/>
</dbReference>
<dbReference type="EvolutionaryTrace" id="P70662"/>
<dbReference type="PRO" id="PR:P70662"/>
<dbReference type="Proteomes" id="UP000000589">
    <property type="component" value="Chromosome 19"/>
</dbReference>
<dbReference type="RNAct" id="P70662">
    <property type="molecule type" value="protein"/>
</dbReference>
<dbReference type="Bgee" id="ENSMUSG00000025223">
    <property type="expression patterns" value="Expressed in embryonic brain and 259 other cell types or tissues"/>
</dbReference>
<dbReference type="ExpressionAtlas" id="P70662">
    <property type="expression patterns" value="baseline and differential"/>
</dbReference>
<dbReference type="GO" id="GO:1990907">
    <property type="term" value="C:beta-catenin-TCF complex"/>
    <property type="evidence" value="ECO:0007669"/>
    <property type="project" value="Ensembl"/>
</dbReference>
<dbReference type="GO" id="GO:0031252">
    <property type="term" value="C:cell leading edge"/>
    <property type="evidence" value="ECO:0000314"/>
    <property type="project" value="UniProtKB"/>
</dbReference>
<dbReference type="GO" id="GO:0000785">
    <property type="term" value="C:chromatin"/>
    <property type="evidence" value="ECO:0007669"/>
    <property type="project" value="Ensembl"/>
</dbReference>
<dbReference type="GO" id="GO:0005654">
    <property type="term" value="C:nucleoplasm"/>
    <property type="evidence" value="ECO:0000304"/>
    <property type="project" value="Reactome"/>
</dbReference>
<dbReference type="GO" id="GO:0005634">
    <property type="term" value="C:nucleus"/>
    <property type="evidence" value="ECO:0000314"/>
    <property type="project" value="UniProtKB"/>
</dbReference>
<dbReference type="GO" id="GO:0032991">
    <property type="term" value="C:protein-containing complex"/>
    <property type="evidence" value="ECO:0000314"/>
    <property type="project" value="UniProtKB"/>
</dbReference>
<dbReference type="GO" id="GO:0090575">
    <property type="term" value="C:RNA polymerase II transcription regulator complex"/>
    <property type="evidence" value="ECO:0000314"/>
    <property type="project" value="MGI"/>
</dbReference>
<dbReference type="GO" id="GO:0005667">
    <property type="term" value="C:transcription regulator complex"/>
    <property type="evidence" value="ECO:0000314"/>
    <property type="project" value="MGI"/>
</dbReference>
<dbReference type="GO" id="GO:0003682">
    <property type="term" value="F:chromatin binding"/>
    <property type="evidence" value="ECO:0000314"/>
    <property type="project" value="MGI"/>
</dbReference>
<dbReference type="GO" id="GO:0140297">
    <property type="term" value="F:DNA-binding transcription factor binding"/>
    <property type="evidence" value="ECO:0000353"/>
    <property type="project" value="UniProtKB"/>
</dbReference>
<dbReference type="GO" id="GO:0019899">
    <property type="term" value="F:enzyme binding"/>
    <property type="evidence" value="ECO:0000353"/>
    <property type="project" value="UniProtKB"/>
</dbReference>
<dbReference type="GO" id="GO:0042802">
    <property type="term" value="F:identical protein binding"/>
    <property type="evidence" value="ECO:0000353"/>
    <property type="project" value="MGI"/>
</dbReference>
<dbReference type="GO" id="GO:0030274">
    <property type="term" value="F:LIM domain binding"/>
    <property type="evidence" value="ECO:0000314"/>
    <property type="project" value="UniProtKB"/>
</dbReference>
<dbReference type="GO" id="GO:0042803">
    <property type="term" value="F:protein homodimerization activity"/>
    <property type="evidence" value="ECO:0000314"/>
    <property type="project" value="UniProtKB"/>
</dbReference>
<dbReference type="GO" id="GO:0061629">
    <property type="term" value="F:RNA polymerase II-specific DNA-binding transcription factor binding"/>
    <property type="evidence" value="ECO:0007669"/>
    <property type="project" value="Ensembl"/>
</dbReference>
<dbReference type="GO" id="GO:0003713">
    <property type="term" value="F:transcription coactivator activity"/>
    <property type="evidence" value="ECO:0000315"/>
    <property type="project" value="UniProtKB"/>
</dbReference>
<dbReference type="GO" id="GO:0009948">
    <property type="term" value="P:anterior/posterior axis specification"/>
    <property type="evidence" value="ECO:0000315"/>
    <property type="project" value="MGI"/>
</dbReference>
<dbReference type="GO" id="GO:0007155">
    <property type="term" value="P:cell adhesion"/>
    <property type="evidence" value="ECO:0000316"/>
    <property type="project" value="MGI"/>
</dbReference>
<dbReference type="GO" id="GO:0022607">
    <property type="term" value="P:cellular component assembly"/>
    <property type="evidence" value="ECO:0000316"/>
    <property type="project" value="MGI"/>
</dbReference>
<dbReference type="GO" id="GO:0021702">
    <property type="term" value="P:cerebellar Purkinje cell differentiation"/>
    <property type="evidence" value="ECO:0000315"/>
    <property type="project" value="MGI"/>
</dbReference>
<dbReference type="GO" id="GO:0021549">
    <property type="term" value="P:cerebellum development"/>
    <property type="evidence" value="ECO:0000315"/>
    <property type="project" value="MGI"/>
</dbReference>
<dbReference type="GO" id="GO:0010669">
    <property type="term" value="P:epithelial structure maintenance"/>
    <property type="evidence" value="ECO:0000316"/>
    <property type="project" value="MGI"/>
</dbReference>
<dbReference type="GO" id="GO:0001702">
    <property type="term" value="P:gastrulation with mouth forming second"/>
    <property type="evidence" value="ECO:0000315"/>
    <property type="project" value="MGI"/>
</dbReference>
<dbReference type="GO" id="GO:0001942">
    <property type="term" value="P:hair follicle development"/>
    <property type="evidence" value="ECO:0000316"/>
    <property type="project" value="MGI"/>
</dbReference>
<dbReference type="GO" id="GO:0060322">
    <property type="term" value="P:head development"/>
    <property type="evidence" value="ECO:0000316"/>
    <property type="project" value="UniProtKB"/>
</dbReference>
<dbReference type="GO" id="GO:0045892">
    <property type="term" value="P:negative regulation of DNA-templated transcription"/>
    <property type="evidence" value="ECO:0007669"/>
    <property type="project" value="Ensembl"/>
</dbReference>
<dbReference type="GO" id="GO:0045647">
    <property type="term" value="P:negative regulation of erythrocyte differentiation"/>
    <property type="evidence" value="ECO:0000315"/>
    <property type="project" value="UniProtKB"/>
</dbReference>
<dbReference type="GO" id="GO:0030182">
    <property type="term" value="P:neuron differentiation"/>
    <property type="evidence" value="ECO:0000270"/>
    <property type="project" value="UniProtKB"/>
</dbReference>
<dbReference type="GO" id="GO:0045785">
    <property type="term" value="P:positive regulation of cell adhesion"/>
    <property type="evidence" value="ECO:0000316"/>
    <property type="project" value="MGI"/>
</dbReference>
<dbReference type="GO" id="GO:0046985">
    <property type="term" value="P:positive regulation of hemoglobin biosynthetic process"/>
    <property type="evidence" value="ECO:0000315"/>
    <property type="project" value="BHF-UCL"/>
</dbReference>
<dbReference type="GO" id="GO:0045944">
    <property type="term" value="P:positive regulation of transcription by RNA polymerase II"/>
    <property type="evidence" value="ECO:0000315"/>
    <property type="project" value="UniProtKB"/>
</dbReference>
<dbReference type="GO" id="GO:0032968">
    <property type="term" value="P:positive regulation of transcription elongation by RNA polymerase II"/>
    <property type="evidence" value="ECO:0000315"/>
    <property type="project" value="BHF-UCL"/>
</dbReference>
<dbReference type="GO" id="GO:0060319">
    <property type="term" value="P:primitive erythrocyte differentiation"/>
    <property type="evidence" value="ECO:0000304"/>
    <property type="project" value="BHF-UCL"/>
</dbReference>
<dbReference type="GO" id="GO:0030334">
    <property type="term" value="P:regulation of cell migration"/>
    <property type="evidence" value="ECO:0000314"/>
    <property type="project" value="UniProtKB"/>
</dbReference>
<dbReference type="GO" id="GO:0051893">
    <property type="term" value="P:regulation of focal adhesion assembly"/>
    <property type="evidence" value="ECO:0000314"/>
    <property type="project" value="UniProtKB"/>
</dbReference>
<dbReference type="GO" id="GO:0043549">
    <property type="term" value="P:regulation of kinase activity"/>
    <property type="evidence" value="ECO:0000314"/>
    <property type="project" value="UniProtKB"/>
</dbReference>
<dbReference type="GO" id="GO:0035019">
    <property type="term" value="P:somatic stem cell population maintenance"/>
    <property type="evidence" value="ECO:0000316"/>
    <property type="project" value="MGI"/>
</dbReference>
<dbReference type="GO" id="GO:0006366">
    <property type="term" value="P:transcription by RNA polymerase II"/>
    <property type="evidence" value="ECO:0000314"/>
    <property type="project" value="UniProtKB"/>
</dbReference>
<dbReference type="GO" id="GO:0000972">
    <property type="term" value="P:transcription-dependent tethering of RNA polymerase II gene DNA at nuclear periphery"/>
    <property type="evidence" value="ECO:0000315"/>
    <property type="project" value="BHF-UCL"/>
</dbReference>
<dbReference type="GO" id="GO:0016055">
    <property type="term" value="P:Wnt signaling pathway"/>
    <property type="evidence" value="ECO:0000315"/>
    <property type="project" value="MGI"/>
</dbReference>
<dbReference type="FunFam" id="2.10.110.10:FF:000063">
    <property type="entry name" value="LIM domain-binding protein 2 isoform X2"/>
    <property type="match status" value="1"/>
</dbReference>
<dbReference type="Gene3D" id="2.10.110.10">
    <property type="entry name" value="Cysteine Rich Protein"/>
    <property type="match status" value="1"/>
</dbReference>
<dbReference type="IDEAL" id="IID50049"/>
<dbReference type="InterPro" id="IPR041363">
    <property type="entry name" value="LID"/>
</dbReference>
<dbReference type="InterPro" id="IPR029005">
    <property type="entry name" value="LIM-bd/SEUSS"/>
</dbReference>
<dbReference type="PANTHER" id="PTHR10378">
    <property type="entry name" value="LIM DOMAIN-BINDING PROTEIN"/>
    <property type="match status" value="1"/>
</dbReference>
<dbReference type="Pfam" id="PF17916">
    <property type="entry name" value="LID"/>
    <property type="match status" value="1"/>
</dbReference>
<dbReference type="Pfam" id="PF01803">
    <property type="entry name" value="LIM_bind"/>
    <property type="match status" value="1"/>
</dbReference>
<dbReference type="PROSITE" id="PS51957">
    <property type="entry name" value="LID"/>
    <property type="match status" value="1"/>
</dbReference>
<name>LDB1_MOUSE</name>
<evidence type="ECO:0000250" key="1">
    <source>
        <dbReference type="UniProtKB" id="Q86U70"/>
    </source>
</evidence>
<evidence type="ECO:0000255" key="2">
    <source>
        <dbReference type="PROSITE-ProRule" id="PRU01302"/>
    </source>
</evidence>
<evidence type="ECO:0000256" key="3">
    <source>
        <dbReference type="SAM" id="MobiDB-lite"/>
    </source>
</evidence>
<evidence type="ECO:0000269" key="4">
    <source>
    </source>
</evidence>
<evidence type="ECO:0000269" key="5">
    <source>
    </source>
</evidence>
<evidence type="ECO:0000269" key="6">
    <source>
    </source>
</evidence>
<evidence type="ECO:0000269" key="7">
    <source>
    </source>
</evidence>
<evidence type="ECO:0000269" key="8">
    <source>
    </source>
</evidence>
<evidence type="ECO:0000269" key="9">
    <source>
    </source>
</evidence>
<evidence type="ECO:0000269" key="10">
    <source>
    </source>
</evidence>
<evidence type="ECO:0000269" key="11">
    <source>
    </source>
</evidence>
<evidence type="ECO:0000269" key="12">
    <source>
    </source>
</evidence>
<evidence type="ECO:0000269" key="13">
    <source>
    </source>
</evidence>
<evidence type="ECO:0000269" key="14">
    <source>
    </source>
</evidence>
<evidence type="ECO:0000269" key="15">
    <source>
    </source>
</evidence>
<evidence type="ECO:0000269" key="16">
    <source>
    </source>
</evidence>
<evidence type="ECO:0000269" key="17">
    <source>
    </source>
</evidence>
<evidence type="ECO:0000269" key="18">
    <source>
    </source>
</evidence>
<evidence type="ECO:0000269" key="19">
    <source>
    </source>
</evidence>
<evidence type="ECO:0000269" key="20">
    <source>
    </source>
</evidence>
<evidence type="ECO:0000269" key="21">
    <source>
    </source>
</evidence>
<evidence type="ECO:0000303" key="22">
    <source>
    </source>
</evidence>
<evidence type="ECO:0000303" key="23">
    <source>
    </source>
</evidence>
<evidence type="ECO:0000303" key="24">
    <source>
    </source>
</evidence>
<evidence type="ECO:0000303" key="25">
    <source>
    </source>
</evidence>
<evidence type="ECO:0000303" key="26">
    <source>
    </source>
</evidence>
<evidence type="ECO:0000305" key="27"/>
<evidence type="ECO:0007744" key="28">
    <source>
    </source>
</evidence>
<evidence type="ECO:0007829" key="29">
    <source>
        <dbReference type="PDB" id="1J2O"/>
    </source>
</evidence>
<evidence type="ECO:0007829" key="30">
    <source>
        <dbReference type="PDB" id="1M3V"/>
    </source>
</evidence>
<evidence type="ECO:0007829" key="31">
    <source>
        <dbReference type="PDB" id="1RUT"/>
    </source>
</evidence>
<evidence type="ECO:0007829" key="32">
    <source>
        <dbReference type="PDB" id="6PTL"/>
    </source>
</evidence>
<reference key="1">
    <citation type="journal article" date="1996" name="Nature">
        <title>Interactions of the LIM-domain-binding factor Ldb1 with LIM homeodomain proteins.</title>
        <authorList>
            <person name="Agulnick A.D."/>
            <person name="Taira M."/>
            <person name="Breen J.J."/>
            <person name="Tanaka T."/>
            <person name="Dawid I.B."/>
            <person name="Westphal H."/>
        </authorList>
    </citation>
    <scope>NUCLEOTIDE SEQUENCE [MRNA] (ISOFORM 3)</scope>
    <scope>FUNCTION</scope>
    <scope>INTERACTION WITH LHX1</scope>
    <scope>DEVELOPMENTAL STAGE</scope>
    <source>
        <strain>Swiss Webster</strain>
        <tissue>Embryo</tissue>
    </source>
</reference>
<reference key="2">
    <citation type="journal article" date="1996" name="Proc. Natl. Acad. Sci. U.S.A.">
        <title>Nuclear LIM interactor, a rhombotin and LIM homeodomain interacting protein, is expressed early in neuronal development.</title>
        <authorList>
            <person name="Jurata L.W."/>
            <person name="Kenny D.A."/>
            <person name="Gill G.N."/>
        </authorList>
    </citation>
    <scope>NUCLEOTIDE SEQUENCE [MRNA] (ISOFORM 3)</scope>
    <scope>FUNCTION</scope>
    <scope>SUBCELLULAR LOCATION</scope>
    <source>
        <tissue>Embryo</tissue>
    </source>
</reference>
<reference key="3">
    <citation type="journal article" date="1997" name="Genes Dev.">
        <title>A family of LIM domain-associated cofactors confer transcriptional synergism between LIM and Otx homeodomain proteins.</title>
        <authorList>
            <person name="Bach I."/>
            <person name="Carriere C."/>
            <person name="Ostendorff H.P."/>
            <person name="Andersen B."/>
            <person name="Rosenfeld M.G."/>
        </authorList>
    </citation>
    <scope>NUCLEOTIDE SEQUENCE [MRNA] (ISOFORM 3)</scope>
    <scope>FUNCTION</scope>
    <scope>TISSUE SPECIFICITY</scope>
    <scope>DEVELOPMENTAL STAGE</scope>
    <source>
        <tissue>Embryonic head</tissue>
    </source>
</reference>
<reference key="4">
    <citation type="journal article" date="1997" name="Proc. Natl. Acad. Sci. U.S.A.">
        <title>The LIM-domain binding protein Ldb1 and its partner LMO2 act as negative regulators of erythroid differentiation.</title>
        <authorList>
            <person name="Visvader J.E."/>
            <person name="Mao X."/>
            <person name="Fujiwara Y."/>
            <person name="Hahm K."/>
            <person name="Orkin S.H."/>
        </authorList>
    </citation>
    <scope>NUCLEOTIDE SEQUENCE [MRNA] (ISOFORM 1)</scope>
    <scope>FUNCTION</scope>
    <scope>SUBCELLULAR LOCATION</scope>
    <scope>IDENTIFICATION IN A COMPLEX WITH LMO2 AND TAL1</scope>
    <scope>INTERACTION WITH LMO2</scope>
    <scope>DEVELOPMENTAL STAGE</scope>
    <source>
        <tissue>Yolk sac</tissue>
    </source>
</reference>
<reference key="5">
    <citation type="journal article" date="1998" name="Genomics">
        <title>Genomic structure and chromosomal localization of the mouse LIM domain-binding protein 1 gene, Ldb1.</title>
        <authorList>
            <person name="Yamashita T."/>
            <person name="Agulnick A.D."/>
            <person name="Copeland N.G."/>
            <person name="Gilbert D.J."/>
            <person name="Jenkins N.A."/>
            <person name="Westphal H."/>
        </authorList>
    </citation>
    <scope>NUCLEOTIDE SEQUENCE [GENOMIC DNA]</scope>
    <source>
        <strain>129/Sv</strain>
    </source>
</reference>
<reference key="6">
    <citation type="journal article" date="2006" name="J. Biochem.">
        <title>Spliced isoforms of LIM-domain-binding protein (CLIM/NLI/Ldb) lacking the LIM-interaction domain.</title>
        <authorList>
            <person name="Tran Y.H."/>
            <person name="Xu Z."/>
            <person name="Kato A."/>
            <person name="Mistry A.C."/>
            <person name="Goya Y."/>
            <person name="Taira M."/>
            <person name="Brandt S.J."/>
            <person name="Hirose S."/>
        </authorList>
    </citation>
    <scope>NUCLEOTIDE SEQUENCE [MRNA] (ISOFORM 2)</scope>
    <scope>FUNCTION</scope>
    <scope>ALTERNATIVE SPLICING</scope>
    <scope>DEVELOPMENTAL STAGE</scope>
    <source>
        <tissue>Heart</tissue>
    </source>
</reference>
<reference key="7">
    <citation type="journal article" date="2004" name="Genome Res.">
        <title>The status, quality, and expansion of the NIH full-length cDNA project: the Mammalian Gene Collection (MGC).</title>
        <authorList>
            <consortium name="The MGC Project Team"/>
        </authorList>
    </citation>
    <scope>NUCLEOTIDE SEQUENCE [LARGE SCALE MRNA] (ISOFORM 3)</scope>
    <source>
        <strain>FVB/N</strain>
        <tissue>Mammary gland</tissue>
    </source>
</reference>
<reference key="8">
    <citation type="journal article" date="1997" name="Mol. Cell. Biol.">
        <title>Functional analysis of the nuclear LIM domain interactor NLI.</title>
        <authorList>
            <person name="Jurata L.W."/>
            <person name="Gill G.N."/>
        </authorList>
    </citation>
    <scope>FUNCTION</scope>
    <scope>INTERACTION WITH ISL1; LMO2 AND LMX1A</scope>
    <scope>HOMODIMERIZATION</scope>
    <scope>SUBCELLULAR LOCATION</scope>
    <scope>IDENTIFICATION OF LIM-BINDING DOMAIN</scope>
</reference>
<reference key="9">
    <citation type="journal article" date="1998" name="J. Biol. Chem.">
        <title>Interactions between LIM domains and the LIM domain-binding protein Ldb1.</title>
        <authorList>
            <person name="Breen J.J."/>
            <person name="Agulnick A.D."/>
            <person name="Westphal H."/>
            <person name="Dawid I.B."/>
        </authorList>
    </citation>
    <scope>INTERACTION WITH LHX1</scope>
    <scope>DOMAIN</scope>
    <scope>HOMODIMERIZATION</scope>
</reference>
<reference key="10">
    <citation type="journal article" date="1998" name="Proc. Natl. Acad. Sci. U.S.A.">
        <title>Mouse deformed epidermal autoregulatory factor 1 recruits a LIM domain factor, LMO-4, and CLIM coregulators.</title>
        <authorList>
            <person name="Sugihara T.M."/>
            <person name="Bach I."/>
            <person name="Kioussi C."/>
            <person name="Rosenfeld M.G."/>
            <person name="Andersen B."/>
        </authorList>
    </citation>
    <scope>INTERACTION WITH LMO4</scope>
    <scope>DEVELOPMENTAL STAGE</scope>
</reference>
<reference key="11">
    <citation type="journal article" date="1999" name="J. Biochem.">
        <title>A brain region-specific gene product Lhx6.1 interacts with Ldb1 through tandem LIM-domains.</title>
        <authorList>
            <person name="Kimura N."/>
            <person name="Ueno M."/>
            <person name="Nakashima K."/>
            <person name="Taga T."/>
        </authorList>
    </citation>
    <scope>INTERACTION WITH LHX6</scope>
    <source>
        <tissue>Fetal brain</tissue>
    </source>
</reference>
<reference key="12">
    <citation type="journal article" date="1999" name="Mech. Dev.">
        <title>Characterization of Lhx9, a novel LIM/homeobox gene expressed by the pioneer neurons in the mouse cerebral cortex.</title>
        <authorList>
            <person name="Bertuzzi S."/>
            <person name="Porter F.D."/>
            <person name="Pitts A."/>
            <person name="Kumar M."/>
            <person name="Agulnick A."/>
            <person name="Wassif C."/>
            <person name="Westphal H."/>
        </authorList>
    </citation>
    <scope>INTERACTION WITH LHX9</scope>
</reference>
<reference key="13">
    <citation type="journal article" date="2002" name="Cell">
        <title>LIM factor Lhx3 contributes to the specification of motor neuron and interneuron identity through cell-type-specific protein-protein interactions.</title>
        <authorList>
            <person name="Thaler J.P."/>
            <person name="Lee S.K."/>
            <person name="Jurata L.W."/>
            <person name="Gill G.N."/>
            <person name="Pfaff S.L."/>
        </authorList>
    </citation>
    <scope>FUNCTION</scope>
    <scope>INTERACTION WITH LHX3 AND ISL1</scope>
</reference>
<reference key="14">
    <citation type="journal article" date="2002" name="Nature">
        <title>Ubiquitination-dependent cofactor exchange on LIM homeodomain transcription factors.</title>
        <authorList>
            <person name="Ostendorff H.P."/>
            <person name="Peirano R.I."/>
            <person name="Peters M.A."/>
            <person name="Schluter A."/>
            <person name="Bossenz M."/>
            <person name="Scheffner M."/>
            <person name="Bach I."/>
        </authorList>
    </citation>
    <scope>INTERACTION WITH RLIM</scope>
    <scope>UBIQUITINATION</scope>
</reference>
<reference key="15">
    <citation type="journal article" date="2006" name="EMBO J.">
        <title>ETO2 coordinates cellular proliferation and differentiation during erythropoiesis.</title>
        <authorList>
            <person name="Goardon N."/>
            <person name="Lambert J.A."/>
            <person name="Rodriguez P."/>
            <person name="Nissaire P."/>
            <person name="Herblot S."/>
            <person name="Thibault P."/>
            <person name="Dumenil D."/>
            <person name="Strouboulis J."/>
            <person name="Romeo P.-H."/>
            <person name="Hoang T."/>
        </authorList>
    </citation>
    <scope>IDENTIFICATION IN A NUCLEAR TAL-1 COMPLEX</scope>
</reference>
<reference key="16">
    <citation type="journal article" date="2008" name="Dev. Cell">
        <title>A regulatory network to segregate the identity of neuronal subtypes.</title>
        <authorList>
            <person name="Lee S."/>
            <person name="Lee B."/>
            <person name="Joshi K."/>
            <person name="Pfaff S.L."/>
            <person name="Lee J.W."/>
            <person name="Lee S.K."/>
        </authorList>
    </citation>
    <scope>FUNCTION</scope>
    <scope>INTERACTION WITH LHX3-CONTAINING COMPLEXES</scope>
</reference>
<reference key="17">
    <citation type="journal article" date="2009" name="Mol. Biol. Cell">
        <title>The Ldb1 and Ldb2 transcriptional cofactors interact with the Ste20-like kinase SLK and regulate cell migration.</title>
        <authorList>
            <person name="Storbeck C.J."/>
            <person name="Wagner S."/>
            <person name="O'Reilly P."/>
            <person name="McKay M."/>
            <person name="Parks R.J."/>
            <person name="Westphal H."/>
            <person name="Sabourin L.A."/>
        </authorList>
    </citation>
    <scope>INTERACTION WITH SLK</scope>
    <scope>SUBCELLULAR LOCATION</scope>
</reference>
<reference key="18">
    <citation type="journal article" date="2010" name="Cell">
        <title>A tissue-specific atlas of mouse protein phosphorylation and expression.</title>
        <authorList>
            <person name="Huttlin E.L."/>
            <person name="Jedrychowski M.P."/>
            <person name="Elias J.E."/>
            <person name="Goswami T."/>
            <person name="Rad R."/>
            <person name="Beausoleil S.A."/>
            <person name="Villen J."/>
            <person name="Haas W."/>
            <person name="Sowa M.E."/>
            <person name="Gygi S.P."/>
        </authorList>
    </citation>
    <scope>PHOSPHORYLATION [LARGE SCALE ANALYSIS] AT THR-61 AND SER-302</scope>
    <scope>IDENTIFICATION BY MASS SPECTROMETRY [LARGE SCALE ANALYSIS]</scope>
    <source>
        <tissue>Brain</tissue>
        <tissue>Lung</tissue>
        <tissue>Pancreas</tissue>
        <tissue>Spleen</tissue>
        <tissue>Testis</tissue>
    </source>
</reference>
<reference key="19">
    <citation type="journal article" date="2003" name="EMBO J.">
        <title>Structural basis for the recognition of ldb1 by the N-terminal LIM domains of LMO2 and LMO4.</title>
        <authorList>
            <person name="Deane J.E."/>
            <person name="Mackay J.P."/>
            <person name="Kwan A.H.Y."/>
            <person name="Sum E.Y.M."/>
            <person name="Visvader J.E."/>
            <person name="Matthews J.M."/>
        </authorList>
    </citation>
    <scope>STRUCTURE BY NMR OF 336-375 IN COMPLEXES WITH LMO2 AND LMO4</scope>
</reference>
<reference key="20">
    <citation type="journal article" date="2004" name="EMBO J.">
        <title>Tandem LIM domains provide synergistic binding in the LMO4:Ldb1 complex.</title>
        <authorList>
            <person name="Deane J.E."/>
            <person name="Ryan D.P."/>
            <person name="Sunde M."/>
            <person name="Maher M.J."/>
            <person name="Guss J.M."/>
            <person name="Visvader J.E."/>
            <person name="Matthews J.M."/>
        </authorList>
    </citation>
    <scope>X-RAY CRYSTALLOGRAPHY (1.3 ANGSTROMS) OF 336-375 IN COMPLEX WITH LMO4</scope>
</reference>
<reference key="21">
    <citation type="journal article" date="2013" name="J. Mol. Biol.">
        <title>Structural basis of the interaction of the breast cancer oncogene LMO4 with the tumour suppressor CtIP/RBBP8.</title>
        <authorList>
            <person name="Stokes P.H."/>
            <person name="Liew C.W."/>
            <person name="Kwan A.H."/>
            <person name="Foo P."/>
            <person name="Barker H.E."/>
            <person name="Djamirze A."/>
            <person name="O'Reilly V."/>
            <person name="Visvader J.E."/>
            <person name="Mackay J.P."/>
            <person name="Matthews J.M."/>
        </authorList>
    </citation>
    <scope>INTERACTION WITH LMO4</scope>
</reference>
<protein>
    <recommendedName>
        <fullName>LIM domain-binding protein 1</fullName>
        <shortName>LDB-1</shortName>
    </recommendedName>
    <alternativeName>
        <fullName>Carboxyl-terminal LIM domain-binding protein 2</fullName>
        <shortName>CLIM-2</shortName>
    </alternativeName>
    <alternativeName>
        <fullName>LIM domain-binding factor CLIM2</fullName>
        <shortName>mLdb1</shortName>
    </alternativeName>
    <alternativeName>
        <fullName>Nuclear LIM interactor</fullName>
    </alternativeName>
</protein>
<accession>P70662</accession>
<accession>O55204</accession>
<accession>Q1EQX2</accession>
<accession>Q71V68</accession>
<keyword id="KW-0002">3D-structure</keyword>
<keyword id="KW-0007">Acetylation</keyword>
<keyword id="KW-0025">Alternative splicing</keyword>
<keyword id="KW-0217">Developmental protein</keyword>
<keyword id="KW-0539">Nucleus</keyword>
<keyword id="KW-0597">Phosphoprotein</keyword>
<keyword id="KW-1185">Reference proteome</keyword>
<keyword id="KW-0832">Ubl conjugation</keyword>
<gene>
    <name type="primary">Ldb1</name>
    <name type="synonym">Nli</name>
</gene>
<comment type="function">
    <text evidence="7 11 12 15 16 17 18 19">Binds to the LIM domain of a wide variety of LIM domain-containing transcription factors (PubMed:8918878, PubMed:9192866). May regulate the transcriptional activity of LIM-containing proteins by determining specific partner interactions (PubMed:16815859, PubMed:18539116, PubMed:8918878, PubMed:9192866, PubMed:9315627). Plays a role in the development of interneurons and motor neurons in cooperation with LHX3 and ISL1 (PubMed:12150931, PubMed:18539116, PubMed:8876198). Acts synergistically with LHX1/LIM1 in axis formation and activation of gene expression (PubMed:8918878). Acts with LMO2 in the regulation of red blood cell development, maintaining erythroid precursors in an immature state (PubMed:9391090).</text>
</comment>
<comment type="subunit">
    <text evidence="1 4 5 6 7 8 9 10 12 13 14 16 18 19 20 21">Interacts with ESR1 (By similarity). Forms homodimers and heterodimers (PubMed:9315627, PubMed:9468533). Interacts with and activates LHX1/LIM1 (PubMed:8918878, PubMed:9468533). Interacts with the LIM domains of ISL1 and LMO2 (PubMed:12150931, PubMed:12727888). Can assemble in a complex with LMO2 and TAL1/SCL but does not interact with TAL1/SCL directly (PubMed:9391090). Strongly interacts with the LIM2 domain of LMX1A and more weakly with the LIM1 domain (PubMed:9315627). Homodimerization is not required for, and does not effect, LMX1A-binding (PubMed:9315627). Component of a nuclear TAL-1 complex composed at least of CBFA2T3, LDB1, TAL1 and TCF3 (PubMed:16407974). Interacts with LHX6 and LHX9 (PubMed:10330499, PubMed:10393337). At neuronal promoters, forms a complex with LHX3 involved in the specification of interneurons, in motor neurons, it is displaced by ISL1 to form a ternary complex in which ISL1 contacts both LHX3 and LDB1 (PubMed:12150931, PubMed:18539116). Interacts with SLK; leading to negatively regulate SLK kinase activity (PubMed:19675209). Interacts with YWHAZ (By similarity). Interacts with PRDM1/BLIMP1 (By similarity). Interacts with LMO4 (PubMed:15343268, PubMed:23353824, PubMed:9860983). Interacts with RLIM/RNF12; the interaction inhibits the ubiquitination of LMO proteins (PubMed:11882901).</text>
</comment>
<comment type="interaction">
    <interactant intactId="EBI-6272082">
        <id>P70662</id>
    </interactant>
    <interactant intactId="EBI-8006703">
        <id>O54972</id>
        <label>Cbfa2t3</label>
    </interactant>
    <organismsDiffer>false</organismsDiffer>
    <experiments>2</experiments>
</comment>
<comment type="interaction">
    <interactant intactId="EBI-6272082">
        <id>P70662</id>
    </interactant>
    <interactant intactId="EBI-7988215">
        <id>P61372</id>
        <label>Isl1</label>
    </interactant>
    <organismsDiffer>false</organismsDiffer>
    <experiments>4</experiments>
</comment>
<comment type="interaction">
    <interactant intactId="EBI-6272082">
        <id>P70662</id>
    </interactant>
    <interactant intactId="EBI-7988290">
        <id>P50481</id>
        <label>Lhx3</label>
    </interactant>
    <organismsDiffer>false</organismsDiffer>
    <experiments>5</experiments>
</comment>
<comment type="interaction">
    <interactant intactId="EBI-6272082">
        <id>P70662</id>
    </interactant>
    <interactant intactId="EBI-8006437">
        <id>P22091</id>
        <label>Tal1</label>
    </interactant>
    <organismsDiffer>false</organismsDiffer>
    <experiments>4</experiments>
</comment>
<comment type="interaction">
    <interactant intactId="EBI-6272082">
        <id>P70662</id>
    </interactant>
    <interactant intactId="EBI-310070">
        <id>Q60722</id>
        <label>Tcf4</label>
    </interactant>
    <organismsDiffer>false</organismsDiffer>
    <experiments>2</experiments>
</comment>
<comment type="subcellular location">
    <subcellularLocation>
        <location evidence="15 18 19">Nucleus</location>
    </subcellularLocation>
    <text evidence="13">Colocalizes with SLK at leading edges (PubMed:19675209).</text>
</comment>
<comment type="alternative products">
    <event type="alternative splicing"/>
    <isoform>
        <id>P70662-1</id>
        <name>1</name>
        <name>Visvader-a</name>
        <sequence type="displayed"/>
    </isoform>
    <isoform>
        <id>P70662-2</id>
        <name>2</name>
        <name>Tran-b</name>
        <sequence type="described" ref="VSP_027833 VSP_027834 VSP_027835"/>
    </isoform>
    <isoform>
        <id>P70662-3</id>
        <name>3</name>
        <name>Tran-a</name>
        <sequence type="described" ref="VSP_027833"/>
    </isoform>
</comment>
<comment type="tissue specificity">
    <text evidence="17">Expressed in multiple adult tissues including heart, brain, liver, kidney, testis, lung and muscle, with expression highest in the pituitary gland and skin.</text>
</comment>
<comment type="developmental stage">
    <text evidence="11 16 17 19 21">Expression in the embryo overlaps that of LIM domain-containing proteins (PubMed:9192866). Expressed widely in the embryo with highest expression in several regions of the brain, and the central nervous system ganglia (PubMed:8918878, PubMed:9192866, PubMed:9391090). Also expressed in fetal liver, lung, kidney, thymus and olfactory epithelium (PubMed:16815859, PubMed:9192866, PubMed:9391090). Expressed in, but not restricted to, the basal compartment of interfollicular epidermis, the developing hair follicles during embryogenesis and, in adult hair, expressed in matrix cells and the outer root sheath (PubMed:9860983). Expressed in both embryonic and adult hemopoietic cells, including the erythroid lineage (PubMed:9391090).</text>
</comment>
<comment type="domain">
    <text evidence="20">The dimerization domain is located in the N-terminus.</text>
</comment>
<comment type="PTM">
    <text evidence="6">Ubiquitinated by RLIM/RNF12, leading to its degradation by the proteasome.</text>
</comment>
<comment type="miscellaneous">
    <molecule>Isoform 2</molecule>
    <text evidence="27">Due to intron retention. Lacks LIM-binding domain. Lacks ability to activate LIM domain-dependent transcription.</text>
</comment>
<comment type="similarity">
    <text evidence="27">Belongs to the LDB family.</text>
</comment>
<feature type="initiator methionine" description="Removed" evidence="1">
    <location>
        <position position="1"/>
    </location>
</feature>
<feature type="chain" id="PRO_0000084385" description="LIM domain-binding protein 1">
    <location>
        <begin position="2"/>
        <end position="411"/>
    </location>
</feature>
<feature type="domain" description="LIM interaction domain (LID)" evidence="2">
    <location>
        <begin position="336"/>
        <end position="375"/>
    </location>
</feature>
<feature type="region of interest" description="Disordered" evidence="3">
    <location>
        <begin position="284"/>
        <end position="330"/>
    </location>
</feature>
<feature type="region of interest" description="Disordered" evidence="3">
    <location>
        <begin position="367"/>
        <end position="411"/>
    </location>
</feature>
<feature type="compositionally biased region" description="Low complexity" evidence="3">
    <location>
        <begin position="302"/>
        <end position="318"/>
    </location>
</feature>
<feature type="modified residue" description="N-acetylserine" evidence="1">
    <location>
        <position position="2"/>
    </location>
</feature>
<feature type="modified residue" description="Phosphothreonine" evidence="28">
    <location>
        <position position="61"/>
    </location>
</feature>
<feature type="modified residue" description="Phosphoserine" evidence="1">
    <location>
        <position position="265"/>
    </location>
</feature>
<feature type="modified residue" description="Phosphoserine" evidence="28">
    <location>
        <position position="302"/>
    </location>
</feature>
<feature type="splice variant" id="VSP_027833" description="In isoform 2 and isoform 3." evidence="22 23 24 25 26">
    <location>
        <begin position="1"/>
        <end position="36"/>
    </location>
</feature>
<feature type="splice variant" id="VSP_027834" description="In isoform 2." evidence="23">
    <original>DVMVVGEPTLMGGEFGDEDE</original>
    <variation>VSISAFFSSGLPHCSPLTPV</variation>
    <location>
        <begin position="336"/>
        <end position="355"/>
    </location>
</feature>
<feature type="splice variant" id="VSP_027835" description="In isoform 2." evidence="23">
    <location>
        <begin position="356"/>
        <end position="411"/>
    </location>
</feature>
<feature type="sequence conflict" description="In Ref. 3; AAB96885." evidence="27" ref="3">
    <original>Y</original>
    <variation>C</variation>
    <location>
        <position position="262"/>
    </location>
</feature>
<feature type="sequence conflict" description="In Ref. 3; AAB96885." evidence="27" ref="3">
    <original>V</original>
    <variation>A</variation>
    <location>
        <position position="334"/>
    </location>
</feature>
<feature type="sequence conflict" description="In Ref. 3; AAB96885." evidence="27" ref="3">
    <original>PW</original>
    <variation>QR</variation>
    <location>
        <begin position="389"/>
        <end position="390"/>
    </location>
</feature>
<feature type="helix" evidence="32">
    <location>
        <begin position="68"/>
        <end position="77"/>
    </location>
</feature>
<feature type="helix" evidence="32">
    <location>
        <begin position="78"/>
        <end position="80"/>
    </location>
</feature>
<feature type="helix" evidence="32">
    <location>
        <begin position="87"/>
        <end position="97"/>
    </location>
</feature>
<feature type="strand" evidence="32">
    <location>
        <begin position="98"/>
        <end position="107"/>
    </location>
</feature>
<feature type="strand" evidence="32">
    <location>
        <begin position="116"/>
        <end position="120"/>
    </location>
</feature>
<feature type="helix" evidence="32">
    <location>
        <begin position="121"/>
        <end position="123"/>
    </location>
</feature>
<feature type="helix" evidence="32">
    <location>
        <begin position="124"/>
        <end position="133"/>
    </location>
</feature>
<feature type="strand" evidence="32">
    <location>
        <begin position="137"/>
        <end position="145"/>
    </location>
</feature>
<feature type="strand" evidence="32">
    <location>
        <begin position="147"/>
        <end position="150"/>
    </location>
</feature>
<feature type="strand" evidence="32">
    <location>
        <begin position="152"/>
        <end position="167"/>
    </location>
</feature>
<feature type="turn" evidence="32">
    <location>
        <begin position="170"/>
        <end position="172"/>
    </location>
</feature>
<feature type="strand" evidence="32">
    <location>
        <begin position="175"/>
        <end position="191"/>
    </location>
</feature>
<feature type="strand" evidence="32">
    <location>
        <begin position="194"/>
        <end position="207"/>
    </location>
</feature>
<feature type="strand" evidence="30">
    <location>
        <begin position="336"/>
        <end position="344"/>
    </location>
</feature>
<feature type="strand" evidence="29">
    <location>
        <begin position="346"/>
        <end position="349"/>
    </location>
</feature>
<feature type="strand" evidence="31">
    <location>
        <begin position="355"/>
        <end position="357"/>
    </location>
</feature>
<feature type="strand" evidence="31">
    <location>
        <begin position="359"/>
        <end position="362"/>
    </location>
</feature>
<organism>
    <name type="scientific">Mus musculus</name>
    <name type="common">Mouse</name>
    <dbReference type="NCBI Taxonomy" id="10090"/>
    <lineage>
        <taxon>Eukaryota</taxon>
        <taxon>Metazoa</taxon>
        <taxon>Chordata</taxon>
        <taxon>Craniata</taxon>
        <taxon>Vertebrata</taxon>
        <taxon>Euteleostomi</taxon>
        <taxon>Mammalia</taxon>
        <taxon>Eutheria</taxon>
        <taxon>Euarchontoglires</taxon>
        <taxon>Glires</taxon>
        <taxon>Rodentia</taxon>
        <taxon>Myomorpha</taxon>
        <taxon>Muroidea</taxon>
        <taxon>Muridae</taxon>
        <taxon>Murinae</taxon>
        <taxon>Mus</taxon>
        <taxon>Mus</taxon>
    </lineage>
</organism>